<name>RS20_NOCSJ</name>
<dbReference type="EMBL" id="CP000509">
    <property type="protein sequence ID" value="ABL81399.1"/>
    <property type="molecule type" value="Genomic_DNA"/>
</dbReference>
<dbReference type="RefSeq" id="WP_011755346.1">
    <property type="nucleotide sequence ID" value="NC_008699.1"/>
</dbReference>
<dbReference type="SMR" id="A1SHW4"/>
<dbReference type="STRING" id="196162.Noca_1889"/>
<dbReference type="KEGG" id="nca:Noca_1889"/>
<dbReference type="eggNOG" id="COG0268">
    <property type="taxonomic scope" value="Bacteria"/>
</dbReference>
<dbReference type="HOGENOM" id="CLU_160655_0_1_11"/>
<dbReference type="OrthoDB" id="9807974at2"/>
<dbReference type="Proteomes" id="UP000000640">
    <property type="component" value="Chromosome"/>
</dbReference>
<dbReference type="GO" id="GO:0005829">
    <property type="term" value="C:cytosol"/>
    <property type="evidence" value="ECO:0007669"/>
    <property type="project" value="TreeGrafter"/>
</dbReference>
<dbReference type="GO" id="GO:0015935">
    <property type="term" value="C:small ribosomal subunit"/>
    <property type="evidence" value="ECO:0007669"/>
    <property type="project" value="TreeGrafter"/>
</dbReference>
<dbReference type="GO" id="GO:0070181">
    <property type="term" value="F:small ribosomal subunit rRNA binding"/>
    <property type="evidence" value="ECO:0007669"/>
    <property type="project" value="TreeGrafter"/>
</dbReference>
<dbReference type="GO" id="GO:0003735">
    <property type="term" value="F:structural constituent of ribosome"/>
    <property type="evidence" value="ECO:0007669"/>
    <property type="project" value="InterPro"/>
</dbReference>
<dbReference type="GO" id="GO:0006412">
    <property type="term" value="P:translation"/>
    <property type="evidence" value="ECO:0007669"/>
    <property type="project" value="UniProtKB-UniRule"/>
</dbReference>
<dbReference type="FunFam" id="1.20.58.110:FF:000001">
    <property type="entry name" value="30S ribosomal protein S20"/>
    <property type="match status" value="1"/>
</dbReference>
<dbReference type="Gene3D" id="1.20.58.110">
    <property type="entry name" value="Ribosomal protein S20"/>
    <property type="match status" value="1"/>
</dbReference>
<dbReference type="HAMAP" id="MF_00500">
    <property type="entry name" value="Ribosomal_bS20"/>
    <property type="match status" value="1"/>
</dbReference>
<dbReference type="InterPro" id="IPR002583">
    <property type="entry name" value="Ribosomal_bS20"/>
</dbReference>
<dbReference type="InterPro" id="IPR036510">
    <property type="entry name" value="Ribosomal_bS20_sf"/>
</dbReference>
<dbReference type="NCBIfam" id="TIGR00029">
    <property type="entry name" value="S20"/>
    <property type="match status" value="1"/>
</dbReference>
<dbReference type="PANTHER" id="PTHR33398">
    <property type="entry name" value="30S RIBOSOMAL PROTEIN S20"/>
    <property type="match status" value="1"/>
</dbReference>
<dbReference type="PANTHER" id="PTHR33398:SF1">
    <property type="entry name" value="SMALL RIBOSOMAL SUBUNIT PROTEIN BS20C"/>
    <property type="match status" value="1"/>
</dbReference>
<dbReference type="Pfam" id="PF01649">
    <property type="entry name" value="Ribosomal_S20p"/>
    <property type="match status" value="1"/>
</dbReference>
<dbReference type="SUPFAM" id="SSF46992">
    <property type="entry name" value="Ribosomal protein S20"/>
    <property type="match status" value="1"/>
</dbReference>
<comment type="function">
    <text evidence="1">Binds directly to 16S ribosomal RNA.</text>
</comment>
<comment type="similarity">
    <text evidence="1">Belongs to the bacterial ribosomal protein bS20 family.</text>
</comment>
<reference key="1">
    <citation type="submission" date="2006-12" db="EMBL/GenBank/DDBJ databases">
        <title>Complete sequence of chromosome 1 of Nocardioides sp. JS614.</title>
        <authorList>
            <person name="Copeland A."/>
            <person name="Lucas S."/>
            <person name="Lapidus A."/>
            <person name="Barry K."/>
            <person name="Detter J.C."/>
            <person name="Glavina del Rio T."/>
            <person name="Hammon N."/>
            <person name="Israni S."/>
            <person name="Dalin E."/>
            <person name="Tice H."/>
            <person name="Pitluck S."/>
            <person name="Thompson L.S."/>
            <person name="Brettin T."/>
            <person name="Bruce D."/>
            <person name="Han C."/>
            <person name="Tapia R."/>
            <person name="Schmutz J."/>
            <person name="Larimer F."/>
            <person name="Land M."/>
            <person name="Hauser L."/>
            <person name="Kyrpides N."/>
            <person name="Kim E."/>
            <person name="Mattes T."/>
            <person name="Gossett J."/>
            <person name="Richardson P."/>
        </authorList>
    </citation>
    <scope>NUCLEOTIDE SEQUENCE [LARGE SCALE GENOMIC DNA]</scope>
    <source>
        <strain>ATCC BAA-499 / JS614</strain>
    </source>
</reference>
<evidence type="ECO:0000255" key="1">
    <source>
        <dbReference type="HAMAP-Rule" id="MF_00500"/>
    </source>
</evidence>
<evidence type="ECO:0000256" key="2">
    <source>
        <dbReference type="SAM" id="MobiDB-lite"/>
    </source>
</evidence>
<evidence type="ECO:0000305" key="3"/>
<proteinExistence type="inferred from homology"/>
<keyword id="KW-1185">Reference proteome</keyword>
<keyword id="KW-0687">Ribonucleoprotein</keyword>
<keyword id="KW-0689">Ribosomal protein</keyword>
<keyword id="KW-0694">RNA-binding</keyword>
<keyword id="KW-0699">rRNA-binding</keyword>
<sequence>MANIKSQIKRNKQNEKRHERNKAVKTGLKTAVRKFREAAEAGDKDTAVALGQDAARKLDKAASKGVIHKNQAANRKSAIAKKAASL</sequence>
<feature type="chain" id="PRO_1000014616" description="Small ribosomal subunit protein bS20">
    <location>
        <begin position="1"/>
        <end position="86"/>
    </location>
</feature>
<feature type="region of interest" description="Disordered" evidence="2">
    <location>
        <begin position="1"/>
        <end position="25"/>
    </location>
</feature>
<feature type="compositionally biased region" description="Basic and acidic residues" evidence="2">
    <location>
        <begin position="12"/>
        <end position="22"/>
    </location>
</feature>
<gene>
    <name evidence="1" type="primary">rpsT</name>
    <name type="ordered locus">Noca_1889</name>
</gene>
<protein>
    <recommendedName>
        <fullName evidence="1">Small ribosomal subunit protein bS20</fullName>
    </recommendedName>
    <alternativeName>
        <fullName evidence="3">30S ribosomal protein S20</fullName>
    </alternativeName>
</protein>
<organism>
    <name type="scientific">Nocardioides sp. (strain ATCC BAA-499 / JS614)</name>
    <dbReference type="NCBI Taxonomy" id="196162"/>
    <lineage>
        <taxon>Bacteria</taxon>
        <taxon>Bacillati</taxon>
        <taxon>Actinomycetota</taxon>
        <taxon>Actinomycetes</taxon>
        <taxon>Propionibacteriales</taxon>
        <taxon>Nocardioidaceae</taxon>
        <taxon>Nocardioides</taxon>
    </lineage>
</organism>
<accession>A1SHW4</accession>